<keyword id="KW-0150">Chloroplast</keyword>
<keyword id="KW-0934">Plastid</keyword>
<keyword id="KW-1185">Reference proteome</keyword>
<keyword id="KW-0687">Ribonucleoprotein</keyword>
<keyword id="KW-0689">Ribosomal protein</keyword>
<keyword id="KW-0694">RNA-binding</keyword>
<keyword id="KW-0699">rRNA-binding</keyword>
<organism>
    <name type="scientific">Oryza sativa subsp. indica</name>
    <name type="common">Rice</name>
    <dbReference type="NCBI Taxonomy" id="39946"/>
    <lineage>
        <taxon>Eukaryota</taxon>
        <taxon>Viridiplantae</taxon>
        <taxon>Streptophyta</taxon>
        <taxon>Embryophyta</taxon>
        <taxon>Tracheophyta</taxon>
        <taxon>Spermatophyta</taxon>
        <taxon>Magnoliopsida</taxon>
        <taxon>Liliopsida</taxon>
        <taxon>Poales</taxon>
        <taxon>Poaceae</taxon>
        <taxon>BOP clade</taxon>
        <taxon>Oryzoideae</taxon>
        <taxon>Oryzeae</taxon>
        <taxon>Oryzinae</taxon>
        <taxon>Oryza</taxon>
        <taxon>Oryza sativa</taxon>
    </lineage>
</organism>
<geneLocation type="chloroplast"/>
<evidence type="ECO:0000250" key="1"/>
<evidence type="ECO:0000255" key="2">
    <source>
        <dbReference type="HAMAP-Rule" id="MF_00480"/>
    </source>
</evidence>
<evidence type="ECO:0000305" key="3"/>
<feature type="chain" id="PRO_0000290085" description="Small ribosomal subunit protein uS7cz/uS7cy">
    <location>
        <begin position="1"/>
        <end position="156"/>
    </location>
</feature>
<sequence length="156" mass="17629">MSRRGTAEKRTAKSDPIFRNRLVNMVVNRIMKDGKKSLAYQILYRAVKKIQQKTETNPLLVLRQAIRRVTPNIGVKTRRNKKGSTRKVPIEIGSKQGRALAIRWLLEASQKRPGRNMAFKLSSELVDAAKGGGGAIRKKEATHRMAEANRALAHFR</sequence>
<proteinExistence type="inferred from homology"/>
<protein>
    <recommendedName>
        <fullName evidence="2">Small ribosomal subunit protein uS7cz/uS7cy</fullName>
    </recommendedName>
    <alternativeName>
        <fullName>30S ribosomal protein S7, chloroplastic</fullName>
    </alternativeName>
</protein>
<name>RR7_ORYSI</name>
<gene>
    <name type="primary">rps7-A</name>
    <name type="ORF">9311132</name>
</gene>
<gene>
    <name type="primary">rps7-B</name>
    <name type="ORF">9311206</name>
</gene>
<comment type="function">
    <text evidence="1">One of the primary rRNA binding proteins, it binds directly to 16S rRNA where it nucleates assembly of the head domain of the 30S subunit.</text>
</comment>
<comment type="subunit">
    <text>Part of the 30S ribosomal subunit.</text>
</comment>
<comment type="subcellular location">
    <subcellularLocation>
        <location>Plastid</location>
        <location>Chloroplast</location>
    </subcellularLocation>
</comment>
<comment type="similarity">
    <text evidence="3">Belongs to the universal ribosomal protein uS7 family.</text>
</comment>
<comment type="sequence caution" evidence="3">
    <conflict type="erroneous initiation">
        <sequence resource="EMBL-CDS" id="AAS46086"/>
    </conflict>
    <text>Truncated N-terminus.</text>
</comment>
<comment type="sequence caution" evidence="3">
    <conflict type="erroneous initiation">
        <sequence resource="EMBL-CDS" id="AAS46099"/>
    </conflict>
    <text>Truncated N-terminus.</text>
</comment>
<accession>P0C490</accession>
<accession>P05424</accession>
<accession>P62730</accession>
<accession>Q6QXY0</accession>
<accession>Q6QY30</accession>
<dbReference type="EMBL" id="AY522329">
    <property type="protein sequence ID" value="AAS46086.1"/>
    <property type="status" value="ALT_INIT"/>
    <property type="molecule type" value="Genomic_DNA"/>
</dbReference>
<dbReference type="EMBL" id="AY522329">
    <property type="protein sequence ID" value="AAS46099.1"/>
    <property type="status" value="ALT_INIT"/>
    <property type="molecule type" value="Genomic_DNA"/>
</dbReference>
<dbReference type="RefSeq" id="YP_009161413.1">
    <property type="nucleotide sequence ID" value="NC_027678.1"/>
</dbReference>
<dbReference type="RefSeq" id="YP_009161427.1">
    <property type="nucleotide sequence ID" value="NC_027678.1"/>
</dbReference>
<dbReference type="SMR" id="P0C490"/>
<dbReference type="STRING" id="39946.P0C490"/>
<dbReference type="Proteomes" id="UP000007015">
    <property type="component" value="Chloroplast"/>
</dbReference>
<dbReference type="GO" id="GO:0009507">
    <property type="term" value="C:chloroplast"/>
    <property type="evidence" value="ECO:0007669"/>
    <property type="project" value="UniProtKB-SubCell"/>
</dbReference>
<dbReference type="GO" id="GO:0009536">
    <property type="term" value="C:plastid"/>
    <property type="evidence" value="ECO:0000305"/>
    <property type="project" value="Gramene"/>
</dbReference>
<dbReference type="GO" id="GO:0015935">
    <property type="term" value="C:small ribosomal subunit"/>
    <property type="evidence" value="ECO:0007669"/>
    <property type="project" value="InterPro"/>
</dbReference>
<dbReference type="GO" id="GO:0019843">
    <property type="term" value="F:rRNA binding"/>
    <property type="evidence" value="ECO:0007669"/>
    <property type="project" value="UniProtKB-UniRule"/>
</dbReference>
<dbReference type="GO" id="GO:0003735">
    <property type="term" value="F:structural constituent of ribosome"/>
    <property type="evidence" value="ECO:0007669"/>
    <property type="project" value="InterPro"/>
</dbReference>
<dbReference type="GO" id="GO:0006412">
    <property type="term" value="P:translation"/>
    <property type="evidence" value="ECO:0007669"/>
    <property type="project" value="UniProtKB-UniRule"/>
</dbReference>
<dbReference type="CDD" id="cd14871">
    <property type="entry name" value="uS7_Chloroplast"/>
    <property type="match status" value="1"/>
</dbReference>
<dbReference type="FunFam" id="1.10.455.10:FF:000001">
    <property type="entry name" value="30S ribosomal protein S7"/>
    <property type="match status" value="1"/>
</dbReference>
<dbReference type="Gene3D" id="1.10.455.10">
    <property type="entry name" value="Ribosomal protein S7 domain"/>
    <property type="match status" value="1"/>
</dbReference>
<dbReference type="HAMAP" id="MF_00480_B">
    <property type="entry name" value="Ribosomal_uS7_B"/>
    <property type="match status" value="1"/>
</dbReference>
<dbReference type="InterPro" id="IPR000235">
    <property type="entry name" value="Ribosomal_uS7"/>
</dbReference>
<dbReference type="InterPro" id="IPR005717">
    <property type="entry name" value="Ribosomal_uS7_bac/org-type"/>
</dbReference>
<dbReference type="InterPro" id="IPR020606">
    <property type="entry name" value="Ribosomal_uS7_CS"/>
</dbReference>
<dbReference type="InterPro" id="IPR023798">
    <property type="entry name" value="Ribosomal_uS7_dom"/>
</dbReference>
<dbReference type="InterPro" id="IPR036823">
    <property type="entry name" value="Ribosomal_uS7_dom_sf"/>
</dbReference>
<dbReference type="NCBIfam" id="TIGR01029">
    <property type="entry name" value="rpsG_bact"/>
    <property type="match status" value="1"/>
</dbReference>
<dbReference type="PANTHER" id="PTHR11205">
    <property type="entry name" value="RIBOSOMAL PROTEIN S7"/>
    <property type="match status" value="1"/>
</dbReference>
<dbReference type="Pfam" id="PF00177">
    <property type="entry name" value="Ribosomal_S7"/>
    <property type="match status" value="1"/>
</dbReference>
<dbReference type="PIRSF" id="PIRSF002122">
    <property type="entry name" value="RPS7p_RPS7a_RPS5e_RPS7o"/>
    <property type="match status" value="1"/>
</dbReference>
<dbReference type="SUPFAM" id="SSF47973">
    <property type="entry name" value="Ribosomal protein S7"/>
    <property type="match status" value="1"/>
</dbReference>
<dbReference type="PROSITE" id="PS00052">
    <property type="entry name" value="RIBOSOMAL_S7"/>
    <property type="match status" value="1"/>
</dbReference>
<reference key="1">
    <citation type="journal article" date="2004" name="Plant Physiol.">
        <title>A comparison of rice chloroplast genomes.</title>
        <authorList>
            <person name="Tang J."/>
            <person name="Xia H."/>
            <person name="Cao M."/>
            <person name="Zhang X."/>
            <person name="Zeng W."/>
            <person name="Hu S."/>
            <person name="Tong W."/>
            <person name="Wang J."/>
            <person name="Wang J."/>
            <person name="Yu J."/>
            <person name="Yang H."/>
            <person name="Zhu L."/>
        </authorList>
    </citation>
    <scope>NUCLEOTIDE SEQUENCE [LARGE SCALE GENOMIC DNA]</scope>
    <source>
        <strain>cv. 93-11</strain>
    </source>
</reference>